<name>IFFO2_HUMAN</name>
<feature type="chain" id="PRO_0000326185" description="Intermediate filament family orphan 2">
    <location>
        <begin position="1"/>
        <end position="517"/>
    </location>
</feature>
<feature type="domain" description="IF rod" evidence="1">
    <location>
        <begin position="53"/>
        <end position="484"/>
    </location>
</feature>
<feature type="region of interest" description="Disordered" evidence="2">
    <location>
        <begin position="104"/>
        <end position="129"/>
    </location>
</feature>
<feature type="region of interest" description="Disordered" evidence="2">
    <location>
        <begin position="330"/>
        <end position="349"/>
    </location>
</feature>
<feature type="region of interest" description="Disordered" evidence="2">
    <location>
        <begin position="478"/>
        <end position="517"/>
    </location>
</feature>
<feature type="compositionally biased region" description="Low complexity" evidence="2">
    <location>
        <begin position="485"/>
        <end position="497"/>
    </location>
</feature>
<feature type="compositionally biased region" description="Acidic residues" evidence="2">
    <location>
        <begin position="501"/>
        <end position="517"/>
    </location>
</feature>
<reference key="1">
    <citation type="journal article" date="2006" name="Nature">
        <title>The DNA sequence and biological annotation of human chromosome 1.</title>
        <authorList>
            <person name="Gregory S.G."/>
            <person name="Barlow K.F."/>
            <person name="McLay K.E."/>
            <person name="Kaul R."/>
            <person name="Swarbreck D."/>
            <person name="Dunham A."/>
            <person name="Scott C.E."/>
            <person name="Howe K.L."/>
            <person name="Woodfine K."/>
            <person name="Spencer C.C.A."/>
            <person name="Jones M.C."/>
            <person name="Gillson C."/>
            <person name="Searle S."/>
            <person name="Zhou Y."/>
            <person name="Kokocinski F."/>
            <person name="McDonald L."/>
            <person name="Evans R."/>
            <person name="Phillips K."/>
            <person name="Atkinson A."/>
            <person name="Cooper R."/>
            <person name="Jones C."/>
            <person name="Hall R.E."/>
            <person name="Andrews T.D."/>
            <person name="Lloyd C."/>
            <person name="Ainscough R."/>
            <person name="Almeida J.P."/>
            <person name="Ambrose K.D."/>
            <person name="Anderson F."/>
            <person name="Andrew R.W."/>
            <person name="Ashwell R.I.S."/>
            <person name="Aubin K."/>
            <person name="Babbage A.K."/>
            <person name="Bagguley C.L."/>
            <person name="Bailey J."/>
            <person name="Beasley H."/>
            <person name="Bethel G."/>
            <person name="Bird C.P."/>
            <person name="Bray-Allen S."/>
            <person name="Brown J.Y."/>
            <person name="Brown A.J."/>
            <person name="Buckley D."/>
            <person name="Burton J."/>
            <person name="Bye J."/>
            <person name="Carder C."/>
            <person name="Chapman J.C."/>
            <person name="Clark S.Y."/>
            <person name="Clarke G."/>
            <person name="Clee C."/>
            <person name="Cobley V."/>
            <person name="Collier R.E."/>
            <person name="Corby N."/>
            <person name="Coville G.J."/>
            <person name="Davies J."/>
            <person name="Deadman R."/>
            <person name="Dunn M."/>
            <person name="Earthrowl M."/>
            <person name="Ellington A.G."/>
            <person name="Errington H."/>
            <person name="Frankish A."/>
            <person name="Frankland J."/>
            <person name="French L."/>
            <person name="Garner P."/>
            <person name="Garnett J."/>
            <person name="Gay L."/>
            <person name="Ghori M.R.J."/>
            <person name="Gibson R."/>
            <person name="Gilby L.M."/>
            <person name="Gillett W."/>
            <person name="Glithero R.J."/>
            <person name="Grafham D.V."/>
            <person name="Griffiths C."/>
            <person name="Griffiths-Jones S."/>
            <person name="Grocock R."/>
            <person name="Hammond S."/>
            <person name="Harrison E.S.I."/>
            <person name="Hart E."/>
            <person name="Haugen E."/>
            <person name="Heath P.D."/>
            <person name="Holmes S."/>
            <person name="Holt K."/>
            <person name="Howden P.J."/>
            <person name="Hunt A.R."/>
            <person name="Hunt S.E."/>
            <person name="Hunter G."/>
            <person name="Isherwood J."/>
            <person name="James R."/>
            <person name="Johnson C."/>
            <person name="Johnson D."/>
            <person name="Joy A."/>
            <person name="Kay M."/>
            <person name="Kershaw J.K."/>
            <person name="Kibukawa M."/>
            <person name="Kimberley A.M."/>
            <person name="King A."/>
            <person name="Knights A.J."/>
            <person name="Lad H."/>
            <person name="Laird G."/>
            <person name="Lawlor S."/>
            <person name="Leongamornlert D.A."/>
            <person name="Lloyd D.M."/>
            <person name="Loveland J."/>
            <person name="Lovell J."/>
            <person name="Lush M.J."/>
            <person name="Lyne R."/>
            <person name="Martin S."/>
            <person name="Mashreghi-Mohammadi M."/>
            <person name="Matthews L."/>
            <person name="Matthews N.S.W."/>
            <person name="McLaren S."/>
            <person name="Milne S."/>
            <person name="Mistry S."/>
            <person name="Moore M.J.F."/>
            <person name="Nickerson T."/>
            <person name="O'Dell C.N."/>
            <person name="Oliver K."/>
            <person name="Palmeiri A."/>
            <person name="Palmer S.A."/>
            <person name="Parker A."/>
            <person name="Patel D."/>
            <person name="Pearce A.V."/>
            <person name="Peck A.I."/>
            <person name="Pelan S."/>
            <person name="Phelps K."/>
            <person name="Phillimore B.J."/>
            <person name="Plumb R."/>
            <person name="Rajan J."/>
            <person name="Raymond C."/>
            <person name="Rouse G."/>
            <person name="Saenphimmachak C."/>
            <person name="Sehra H.K."/>
            <person name="Sheridan E."/>
            <person name="Shownkeen R."/>
            <person name="Sims S."/>
            <person name="Skuce C.D."/>
            <person name="Smith M."/>
            <person name="Steward C."/>
            <person name="Subramanian S."/>
            <person name="Sycamore N."/>
            <person name="Tracey A."/>
            <person name="Tromans A."/>
            <person name="Van Helmond Z."/>
            <person name="Wall M."/>
            <person name="Wallis J.M."/>
            <person name="White S."/>
            <person name="Whitehead S.L."/>
            <person name="Wilkinson J.E."/>
            <person name="Willey D.L."/>
            <person name="Williams H."/>
            <person name="Wilming L."/>
            <person name="Wray P.W."/>
            <person name="Wu Z."/>
            <person name="Coulson A."/>
            <person name="Vaudin M."/>
            <person name="Sulston J.E."/>
            <person name="Durbin R.M."/>
            <person name="Hubbard T."/>
            <person name="Wooster R."/>
            <person name="Dunham I."/>
            <person name="Carter N.P."/>
            <person name="McVean G."/>
            <person name="Ross M.T."/>
            <person name="Harrow J."/>
            <person name="Olson M.V."/>
            <person name="Beck S."/>
            <person name="Rogers J."/>
            <person name="Bentley D.R."/>
        </authorList>
    </citation>
    <scope>NUCLEOTIDE SEQUENCE [LARGE SCALE GENOMIC DNA]</scope>
</reference>
<reference key="2">
    <citation type="journal article" date="2004" name="Nat. Genet.">
        <title>Complete sequencing and characterization of 21,243 full-length human cDNAs.</title>
        <authorList>
            <person name="Ota T."/>
            <person name="Suzuki Y."/>
            <person name="Nishikawa T."/>
            <person name="Otsuki T."/>
            <person name="Sugiyama T."/>
            <person name="Irie R."/>
            <person name="Wakamatsu A."/>
            <person name="Hayashi K."/>
            <person name="Sato H."/>
            <person name="Nagai K."/>
            <person name="Kimura K."/>
            <person name="Makita H."/>
            <person name="Sekine M."/>
            <person name="Obayashi M."/>
            <person name="Nishi T."/>
            <person name="Shibahara T."/>
            <person name="Tanaka T."/>
            <person name="Ishii S."/>
            <person name="Yamamoto J."/>
            <person name="Saito K."/>
            <person name="Kawai Y."/>
            <person name="Isono Y."/>
            <person name="Nakamura Y."/>
            <person name="Nagahari K."/>
            <person name="Murakami K."/>
            <person name="Yasuda T."/>
            <person name="Iwayanagi T."/>
            <person name="Wagatsuma M."/>
            <person name="Shiratori A."/>
            <person name="Sudo H."/>
            <person name="Hosoiri T."/>
            <person name="Kaku Y."/>
            <person name="Kodaira H."/>
            <person name="Kondo H."/>
            <person name="Sugawara M."/>
            <person name="Takahashi M."/>
            <person name="Kanda K."/>
            <person name="Yokoi T."/>
            <person name="Furuya T."/>
            <person name="Kikkawa E."/>
            <person name="Omura Y."/>
            <person name="Abe K."/>
            <person name="Kamihara K."/>
            <person name="Katsuta N."/>
            <person name="Sato K."/>
            <person name="Tanikawa M."/>
            <person name="Yamazaki M."/>
            <person name="Ninomiya K."/>
            <person name="Ishibashi T."/>
            <person name="Yamashita H."/>
            <person name="Murakawa K."/>
            <person name="Fujimori K."/>
            <person name="Tanai H."/>
            <person name="Kimata M."/>
            <person name="Watanabe M."/>
            <person name="Hiraoka S."/>
            <person name="Chiba Y."/>
            <person name="Ishida S."/>
            <person name="Ono Y."/>
            <person name="Takiguchi S."/>
            <person name="Watanabe S."/>
            <person name="Yosida M."/>
            <person name="Hotuta T."/>
            <person name="Kusano J."/>
            <person name="Kanehori K."/>
            <person name="Takahashi-Fujii A."/>
            <person name="Hara H."/>
            <person name="Tanase T.-O."/>
            <person name="Nomura Y."/>
            <person name="Togiya S."/>
            <person name="Komai F."/>
            <person name="Hara R."/>
            <person name="Takeuchi K."/>
            <person name="Arita M."/>
            <person name="Imose N."/>
            <person name="Musashino K."/>
            <person name="Yuuki H."/>
            <person name="Oshima A."/>
            <person name="Sasaki N."/>
            <person name="Aotsuka S."/>
            <person name="Yoshikawa Y."/>
            <person name="Matsunawa H."/>
            <person name="Ichihara T."/>
            <person name="Shiohata N."/>
            <person name="Sano S."/>
            <person name="Moriya S."/>
            <person name="Momiyama H."/>
            <person name="Satoh N."/>
            <person name="Takami S."/>
            <person name="Terashima Y."/>
            <person name="Suzuki O."/>
            <person name="Nakagawa S."/>
            <person name="Senoh A."/>
            <person name="Mizoguchi H."/>
            <person name="Goto Y."/>
            <person name="Shimizu F."/>
            <person name="Wakebe H."/>
            <person name="Hishigaki H."/>
            <person name="Watanabe T."/>
            <person name="Sugiyama A."/>
            <person name="Takemoto M."/>
            <person name="Kawakami B."/>
            <person name="Yamazaki M."/>
            <person name="Watanabe K."/>
            <person name="Kumagai A."/>
            <person name="Itakura S."/>
            <person name="Fukuzumi Y."/>
            <person name="Fujimori Y."/>
            <person name="Komiyama M."/>
            <person name="Tashiro H."/>
            <person name="Tanigami A."/>
            <person name="Fujiwara T."/>
            <person name="Ono T."/>
            <person name="Yamada K."/>
            <person name="Fujii Y."/>
            <person name="Ozaki K."/>
            <person name="Hirao M."/>
            <person name="Ohmori Y."/>
            <person name="Kawabata A."/>
            <person name="Hikiji T."/>
            <person name="Kobatake N."/>
            <person name="Inagaki H."/>
            <person name="Ikema Y."/>
            <person name="Okamoto S."/>
            <person name="Okitani R."/>
            <person name="Kawakami T."/>
            <person name="Noguchi S."/>
            <person name="Itoh T."/>
            <person name="Shigeta K."/>
            <person name="Senba T."/>
            <person name="Matsumura K."/>
            <person name="Nakajima Y."/>
            <person name="Mizuno T."/>
            <person name="Morinaga M."/>
            <person name="Sasaki M."/>
            <person name="Togashi T."/>
            <person name="Oyama M."/>
            <person name="Hata H."/>
            <person name="Watanabe M."/>
            <person name="Komatsu T."/>
            <person name="Mizushima-Sugano J."/>
            <person name="Satoh T."/>
            <person name="Shirai Y."/>
            <person name="Takahashi Y."/>
            <person name="Nakagawa K."/>
            <person name="Okumura K."/>
            <person name="Nagase T."/>
            <person name="Nomura N."/>
            <person name="Kikuchi H."/>
            <person name="Masuho Y."/>
            <person name="Yamashita R."/>
            <person name="Nakai K."/>
            <person name="Yada T."/>
            <person name="Nakamura Y."/>
            <person name="Ohara O."/>
            <person name="Isogai T."/>
            <person name="Sugano S."/>
        </authorList>
    </citation>
    <scope>NUCLEOTIDE SEQUENCE [LARGE SCALE MRNA] OF 327-517</scope>
    <source>
        <tissue>Spleen</tissue>
    </source>
</reference>
<proteinExistence type="evidence at protein level"/>
<evidence type="ECO:0000255" key="1">
    <source>
        <dbReference type="PROSITE-ProRule" id="PRU01188"/>
    </source>
</evidence>
<evidence type="ECO:0000256" key="2">
    <source>
        <dbReference type="SAM" id="MobiDB-lite"/>
    </source>
</evidence>
<organism>
    <name type="scientific">Homo sapiens</name>
    <name type="common">Human</name>
    <dbReference type="NCBI Taxonomy" id="9606"/>
    <lineage>
        <taxon>Eukaryota</taxon>
        <taxon>Metazoa</taxon>
        <taxon>Chordata</taxon>
        <taxon>Craniata</taxon>
        <taxon>Vertebrata</taxon>
        <taxon>Euteleostomi</taxon>
        <taxon>Mammalia</taxon>
        <taxon>Eutheria</taxon>
        <taxon>Euarchontoglires</taxon>
        <taxon>Primates</taxon>
        <taxon>Haplorrhini</taxon>
        <taxon>Catarrhini</taxon>
        <taxon>Hominidae</taxon>
        <taxon>Homo</taxon>
    </lineage>
</organism>
<dbReference type="EMBL" id="AL080251">
    <property type="status" value="NOT_ANNOTATED_CDS"/>
    <property type="molecule type" value="Genomic_DNA"/>
</dbReference>
<dbReference type="EMBL" id="AK024480">
    <property type="protein sequence ID" value="BAB15770.1"/>
    <property type="molecule type" value="mRNA"/>
</dbReference>
<dbReference type="CCDS" id="CCDS44076.1"/>
<dbReference type="RefSeq" id="NP_001129737.1">
    <property type="nucleotide sequence ID" value="NM_001136265.2"/>
</dbReference>
<dbReference type="SMR" id="Q5TF58"/>
<dbReference type="BioGRID" id="126024">
    <property type="interactions" value="20"/>
</dbReference>
<dbReference type="FunCoup" id="Q5TF58">
    <property type="interactions" value="158"/>
</dbReference>
<dbReference type="IntAct" id="Q5TF58">
    <property type="interactions" value="10"/>
</dbReference>
<dbReference type="STRING" id="9606.ENSP00000387941"/>
<dbReference type="iPTMnet" id="Q5TF58"/>
<dbReference type="PhosphoSitePlus" id="Q5TF58"/>
<dbReference type="BioMuta" id="IFFO2"/>
<dbReference type="DMDM" id="327478574"/>
<dbReference type="jPOST" id="Q5TF58"/>
<dbReference type="MassIVE" id="Q5TF58"/>
<dbReference type="PaxDb" id="9606-ENSP00000387941"/>
<dbReference type="PeptideAtlas" id="Q5TF58"/>
<dbReference type="ProteomicsDB" id="65074"/>
<dbReference type="Antibodypedia" id="2914">
    <property type="antibodies" value="27 antibodies from 12 providers"/>
</dbReference>
<dbReference type="DNASU" id="126917"/>
<dbReference type="Ensembl" id="ENST00000455833.7">
    <property type="protein sequence ID" value="ENSP00000387941.2"/>
    <property type="gene ID" value="ENSG00000169991.11"/>
</dbReference>
<dbReference type="GeneID" id="126917"/>
<dbReference type="KEGG" id="hsa:126917"/>
<dbReference type="MANE-Select" id="ENST00000455833.7">
    <property type="protein sequence ID" value="ENSP00000387941.2"/>
    <property type="RefSeq nucleotide sequence ID" value="NM_001136265.2"/>
    <property type="RefSeq protein sequence ID" value="NP_001129737.1"/>
</dbReference>
<dbReference type="UCSC" id="uc001bbd.3">
    <property type="organism name" value="human"/>
</dbReference>
<dbReference type="AGR" id="HGNC:27006"/>
<dbReference type="CTD" id="126917"/>
<dbReference type="DisGeNET" id="126917"/>
<dbReference type="GeneCards" id="IFFO2"/>
<dbReference type="HGNC" id="HGNC:27006">
    <property type="gene designation" value="IFFO2"/>
</dbReference>
<dbReference type="HPA" id="ENSG00000169991">
    <property type="expression patterns" value="Tissue enhanced (skin)"/>
</dbReference>
<dbReference type="neXtProt" id="NX_Q5TF58"/>
<dbReference type="OpenTargets" id="ENSG00000169991"/>
<dbReference type="VEuPathDB" id="HostDB:ENSG00000169991"/>
<dbReference type="eggNOG" id="ENOG502QW7N">
    <property type="taxonomic scope" value="Eukaryota"/>
</dbReference>
<dbReference type="GeneTree" id="ENSGT00510000046803"/>
<dbReference type="HOGENOM" id="CLU_039629_2_1_1"/>
<dbReference type="InParanoid" id="Q5TF58"/>
<dbReference type="OMA" id="KGAAACC"/>
<dbReference type="OrthoDB" id="9946830at2759"/>
<dbReference type="PAN-GO" id="Q5TF58">
    <property type="GO annotations" value="0 GO annotations based on evolutionary models"/>
</dbReference>
<dbReference type="PhylomeDB" id="Q5TF58"/>
<dbReference type="TreeFam" id="TF331217"/>
<dbReference type="PathwayCommons" id="Q5TF58"/>
<dbReference type="SignaLink" id="Q5TF58"/>
<dbReference type="BioGRID-ORCS" id="126917">
    <property type="hits" value="11 hits in 1149 CRISPR screens"/>
</dbReference>
<dbReference type="CD-CODE" id="8C2F96ED">
    <property type="entry name" value="Centrosome"/>
</dbReference>
<dbReference type="ChiTaRS" id="IFFO2">
    <property type="organism name" value="human"/>
</dbReference>
<dbReference type="GenomeRNAi" id="126917"/>
<dbReference type="Pharos" id="Q5TF58">
    <property type="development level" value="Tdark"/>
</dbReference>
<dbReference type="PRO" id="PR:Q5TF58"/>
<dbReference type="Proteomes" id="UP000005640">
    <property type="component" value="Chromosome 1"/>
</dbReference>
<dbReference type="RNAct" id="Q5TF58">
    <property type="molecule type" value="protein"/>
</dbReference>
<dbReference type="Bgee" id="ENSG00000169991">
    <property type="expression patterns" value="Expressed in upper arm skin and 150 other cell types or tissues"/>
</dbReference>
<dbReference type="ExpressionAtlas" id="Q5TF58">
    <property type="expression patterns" value="baseline and differential"/>
</dbReference>
<dbReference type="GO" id="GO:0005882">
    <property type="term" value="C:intermediate filament"/>
    <property type="evidence" value="ECO:0007669"/>
    <property type="project" value="UniProtKB-KW"/>
</dbReference>
<dbReference type="Gene3D" id="1.20.5.170">
    <property type="match status" value="1"/>
</dbReference>
<dbReference type="Gene3D" id="1.20.5.1160">
    <property type="entry name" value="Vasodilator-stimulated phosphoprotein"/>
    <property type="match status" value="1"/>
</dbReference>
<dbReference type="InterPro" id="IPR039008">
    <property type="entry name" value="IF_rod_dom"/>
</dbReference>
<dbReference type="PANTHER" id="PTHR14516">
    <property type="entry name" value="1-PYRROLINE-5-CARBOXYLATE DEHYDROGENASE FAMILY MEMBER"/>
    <property type="match status" value="1"/>
</dbReference>
<dbReference type="PANTHER" id="PTHR14516:SF1">
    <property type="entry name" value="INTERMEDIATE FILAMENT FAMILY ORPHAN 2"/>
    <property type="match status" value="1"/>
</dbReference>
<dbReference type="Pfam" id="PF00038">
    <property type="entry name" value="Filament"/>
    <property type="match status" value="1"/>
</dbReference>
<dbReference type="SMART" id="SM01391">
    <property type="entry name" value="Filament"/>
    <property type="match status" value="1"/>
</dbReference>
<dbReference type="SUPFAM" id="SSF64593">
    <property type="entry name" value="Intermediate filament protein, coiled coil region"/>
    <property type="match status" value="1"/>
</dbReference>
<dbReference type="PROSITE" id="PS51842">
    <property type="entry name" value="IF_ROD_2"/>
    <property type="match status" value="1"/>
</dbReference>
<keyword id="KW-0175">Coiled coil</keyword>
<keyword id="KW-0403">Intermediate filament</keyword>
<keyword id="KW-1267">Proteomics identification</keyword>
<keyword id="KW-1185">Reference proteome</keyword>
<protein>
    <recommendedName>
        <fullName>Intermediate filament family orphan 2</fullName>
    </recommendedName>
</protein>
<sequence>MVNSLLFGEMALAFGCPPGGGGGGCPGGGGGGGGAGPGPSPVTAALRDDLGSNIHLLKGLNVRFRCFLAKVHELERRNRLLEKQLEQQQSERERRLRYKTFSREQAVQTGPELLRPPAPGGGHGLSSGAAAGANANAVALGGLPPGGGSHPQHYGRLPGTIWSYTQVRRTGGGGVETVQGPGVSWVHPDGVGVQIDTITPEIRALYNVLAKVKRERDEYKRRWEEELAKRMNLQTMVDTLQEAAQEADAIQEEMNEKIERLKAELVVFKGLMSDPMTDLDTKIQEKAMKVDMDICRRIDITAKLCDVAQQRNSEDVSKIFQVVPKKKERKVASDDDISEQDGEVNRFSDDEVGSMNITDEMKRMFNQLRETFDFDDDCDSLTWEENEDTLLLWEDFTNCNPTIDLQGEQEENLGNLIHETESFFKTRDKEYQETIGQIELELATAKSDMNRHLHEYMEMCSMKRGLDVQMETCRRLIKGSADRNSPSPSSVASSDSGSTDEIQDEFEREADVEPMVS</sequence>
<accession>Q5TF58</accession>
<accession>Q9H7K0</accession>
<comment type="similarity">
    <text evidence="1">Belongs to the intermediate filament family.</text>
</comment>
<gene>
    <name type="primary">IFFO2</name>
</gene>